<evidence type="ECO:0000255" key="1">
    <source>
        <dbReference type="HAMAP-Rule" id="MF_01398"/>
    </source>
</evidence>
<keyword id="KW-0066">ATP synthesis</keyword>
<keyword id="KW-1003">Cell membrane</keyword>
<keyword id="KW-0138">CF(0)</keyword>
<keyword id="KW-0375">Hydrogen ion transport</keyword>
<keyword id="KW-0406">Ion transport</keyword>
<keyword id="KW-0472">Membrane</keyword>
<keyword id="KW-1185">Reference proteome</keyword>
<keyword id="KW-0812">Transmembrane</keyword>
<keyword id="KW-1133">Transmembrane helix</keyword>
<keyword id="KW-0813">Transport</keyword>
<dbReference type="EMBL" id="AE017245">
    <property type="protein sequence ID" value="AAZ43821.2"/>
    <property type="molecule type" value="Genomic_DNA"/>
</dbReference>
<dbReference type="RefSeq" id="WP_050703138.1">
    <property type="nucleotide sequence ID" value="NC_007294.1"/>
</dbReference>
<dbReference type="SMR" id="Q4A600"/>
<dbReference type="STRING" id="262723.MS53_0409"/>
<dbReference type="KEGG" id="msy:MS53_0409"/>
<dbReference type="eggNOG" id="COG0711">
    <property type="taxonomic scope" value="Bacteria"/>
</dbReference>
<dbReference type="HOGENOM" id="CLU_079215_4_3_14"/>
<dbReference type="OrthoDB" id="400556at2"/>
<dbReference type="Proteomes" id="UP000000549">
    <property type="component" value="Chromosome"/>
</dbReference>
<dbReference type="GO" id="GO:0005886">
    <property type="term" value="C:plasma membrane"/>
    <property type="evidence" value="ECO:0007669"/>
    <property type="project" value="UniProtKB-SubCell"/>
</dbReference>
<dbReference type="GO" id="GO:0045259">
    <property type="term" value="C:proton-transporting ATP synthase complex"/>
    <property type="evidence" value="ECO:0007669"/>
    <property type="project" value="UniProtKB-KW"/>
</dbReference>
<dbReference type="GO" id="GO:0046933">
    <property type="term" value="F:proton-transporting ATP synthase activity, rotational mechanism"/>
    <property type="evidence" value="ECO:0007669"/>
    <property type="project" value="UniProtKB-UniRule"/>
</dbReference>
<dbReference type="GO" id="GO:0046961">
    <property type="term" value="F:proton-transporting ATPase activity, rotational mechanism"/>
    <property type="evidence" value="ECO:0007669"/>
    <property type="project" value="TreeGrafter"/>
</dbReference>
<dbReference type="CDD" id="cd06503">
    <property type="entry name" value="ATP-synt_Fo_b"/>
    <property type="match status" value="1"/>
</dbReference>
<dbReference type="HAMAP" id="MF_01398">
    <property type="entry name" value="ATP_synth_b_bprime"/>
    <property type="match status" value="1"/>
</dbReference>
<dbReference type="InterPro" id="IPR028987">
    <property type="entry name" value="ATP_synth_B-like_membr_sf"/>
</dbReference>
<dbReference type="InterPro" id="IPR002146">
    <property type="entry name" value="ATP_synth_b/b'su_bac/chlpt"/>
</dbReference>
<dbReference type="InterPro" id="IPR005864">
    <property type="entry name" value="ATP_synth_F0_bsu_bac"/>
</dbReference>
<dbReference type="InterPro" id="IPR050059">
    <property type="entry name" value="ATP_synthase_B_chain"/>
</dbReference>
<dbReference type="NCBIfam" id="TIGR01144">
    <property type="entry name" value="ATP_synt_b"/>
    <property type="match status" value="1"/>
</dbReference>
<dbReference type="PANTHER" id="PTHR33445:SF1">
    <property type="entry name" value="ATP SYNTHASE SUBUNIT B"/>
    <property type="match status" value="1"/>
</dbReference>
<dbReference type="PANTHER" id="PTHR33445">
    <property type="entry name" value="ATP SYNTHASE SUBUNIT B', CHLOROPLASTIC"/>
    <property type="match status" value="1"/>
</dbReference>
<dbReference type="Pfam" id="PF00430">
    <property type="entry name" value="ATP-synt_B"/>
    <property type="match status" value="1"/>
</dbReference>
<dbReference type="SUPFAM" id="SSF81573">
    <property type="entry name" value="F1F0 ATP synthase subunit B, membrane domain"/>
    <property type="match status" value="1"/>
</dbReference>
<accession>Q4A600</accession>
<organism>
    <name type="scientific">Mycoplasmopsis synoviae (strain 53)</name>
    <name type="common">Mycoplasma synoviae</name>
    <dbReference type="NCBI Taxonomy" id="262723"/>
    <lineage>
        <taxon>Bacteria</taxon>
        <taxon>Bacillati</taxon>
        <taxon>Mycoplasmatota</taxon>
        <taxon>Mycoplasmoidales</taxon>
        <taxon>Metamycoplasmataceae</taxon>
        <taxon>Mycoplasmopsis</taxon>
    </lineage>
</organism>
<gene>
    <name evidence="1" type="primary">atpF</name>
    <name type="ordered locus">MS53_0409</name>
</gene>
<protein>
    <recommendedName>
        <fullName evidence="1">ATP synthase subunit b</fullName>
    </recommendedName>
    <alternativeName>
        <fullName evidence="1">ATP synthase F(0) sector subunit b</fullName>
    </alternativeName>
    <alternativeName>
        <fullName evidence="1">ATPase subunit I</fullName>
    </alternativeName>
    <alternativeName>
        <fullName evidence="1">F-type ATPase subunit b</fullName>
        <shortName evidence="1">F-ATPase subunit b</shortName>
    </alternativeName>
</protein>
<name>ATPF_MYCS5</name>
<feature type="chain" id="PRO_0000368616" description="ATP synthase subunit b">
    <location>
        <begin position="1"/>
        <end position="193"/>
    </location>
</feature>
<feature type="transmembrane region" description="Helical" evidence="1">
    <location>
        <begin position="35"/>
        <end position="55"/>
    </location>
</feature>
<reference key="1">
    <citation type="journal article" date="2005" name="J. Bacteriol.">
        <title>Swine and poultry pathogens: the complete genome sequences of two strains of Mycoplasma hyopneumoniae and a strain of Mycoplasma synoviae.</title>
        <authorList>
            <person name="Vasconcelos A.T.R."/>
            <person name="Ferreira H.B."/>
            <person name="Bizarro C.V."/>
            <person name="Bonatto S.L."/>
            <person name="Carvalho M.O."/>
            <person name="Pinto P.M."/>
            <person name="Almeida D.F."/>
            <person name="Almeida L.G.P."/>
            <person name="Almeida R."/>
            <person name="Alves-Junior L."/>
            <person name="Assuncao E.N."/>
            <person name="Azevedo V.A.C."/>
            <person name="Bogo M.R."/>
            <person name="Brigido M.M."/>
            <person name="Brocchi M."/>
            <person name="Burity H.A."/>
            <person name="Camargo A.A."/>
            <person name="Camargo S.S."/>
            <person name="Carepo M.S."/>
            <person name="Carraro D.M."/>
            <person name="de Mattos Cascardo J.C."/>
            <person name="Castro L.A."/>
            <person name="Cavalcanti G."/>
            <person name="Chemale G."/>
            <person name="Collevatti R.G."/>
            <person name="Cunha C.W."/>
            <person name="Dallagiovanna B."/>
            <person name="Dambros B.P."/>
            <person name="Dellagostin O.A."/>
            <person name="Falcao C."/>
            <person name="Fantinatti-Garboggini F."/>
            <person name="Felipe M.S.S."/>
            <person name="Fiorentin L."/>
            <person name="Franco G.R."/>
            <person name="Freitas N.S.A."/>
            <person name="Frias D."/>
            <person name="Grangeiro T.B."/>
            <person name="Grisard E.C."/>
            <person name="Guimaraes C.T."/>
            <person name="Hungria M."/>
            <person name="Jardim S.N."/>
            <person name="Krieger M.A."/>
            <person name="Laurino J.P."/>
            <person name="Lima L.F.A."/>
            <person name="Lopes M.I."/>
            <person name="Loreto E.L.S."/>
            <person name="Madeira H.M.F."/>
            <person name="Manfio G.P."/>
            <person name="Maranhao A.Q."/>
            <person name="Martinkovics C.T."/>
            <person name="Medeiros S.R.B."/>
            <person name="Moreira M.A.M."/>
            <person name="Neiva M."/>
            <person name="Ramalho-Neto C.E."/>
            <person name="Nicolas M.F."/>
            <person name="Oliveira S.C."/>
            <person name="Paixao R.F.C."/>
            <person name="Pedrosa F.O."/>
            <person name="Pena S.D.J."/>
            <person name="Pereira M."/>
            <person name="Pereira-Ferrari L."/>
            <person name="Piffer I."/>
            <person name="Pinto L.S."/>
            <person name="Potrich D.P."/>
            <person name="Salim A.C.M."/>
            <person name="Santos F.R."/>
            <person name="Schmitt R."/>
            <person name="Schneider M.P.C."/>
            <person name="Schrank A."/>
            <person name="Schrank I.S."/>
            <person name="Schuck A.F."/>
            <person name="Seuanez H.N."/>
            <person name="Silva D.W."/>
            <person name="Silva R."/>
            <person name="Silva S.C."/>
            <person name="Soares C.M.A."/>
            <person name="Souza K.R.L."/>
            <person name="Souza R.C."/>
            <person name="Staats C.C."/>
            <person name="Steffens M.B.R."/>
            <person name="Teixeira S.M.R."/>
            <person name="Urmenyi T.P."/>
            <person name="Vainstein M.H."/>
            <person name="Zuccherato L.W."/>
            <person name="Simpson A.J.G."/>
            <person name="Zaha A."/>
        </authorList>
    </citation>
    <scope>NUCLEOTIDE SEQUENCE [LARGE SCALE GENOMIC DNA]</scope>
    <source>
        <strain>53</strain>
    </source>
</reference>
<proteinExistence type="inferred from homology"/>
<comment type="function">
    <text evidence="1">F(1)F(0) ATP synthase produces ATP from ADP in the presence of a proton or sodium gradient. F-type ATPases consist of two structural domains, F(1) containing the extramembraneous catalytic core and F(0) containing the membrane proton channel, linked together by a central stalk and a peripheral stalk. During catalysis, ATP synthesis in the catalytic domain of F(1) is coupled via a rotary mechanism of the central stalk subunits to proton translocation.</text>
</comment>
<comment type="function">
    <text evidence="1">Component of the F(0) channel, it forms part of the peripheral stalk, linking F(1) to F(0).</text>
</comment>
<comment type="subunit">
    <text evidence="1">F-type ATPases have 2 components, F(1) - the catalytic core - and F(0) - the membrane proton channel. F(1) has five subunits: alpha(3), beta(3), gamma(1), delta(1), epsilon(1). F(0) has three main subunits: a(1), b(2) and c(10-14). The alpha and beta chains form an alternating ring which encloses part of the gamma chain. F(1) is attached to F(0) by a central stalk formed by the gamma and epsilon chains, while a peripheral stalk is formed by the delta and b chains.</text>
</comment>
<comment type="subcellular location">
    <subcellularLocation>
        <location evidence="1">Cell membrane</location>
        <topology evidence="1">Single-pass membrane protein</topology>
    </subcellularLocation>
</comment>
<comment type="similarity">
    <text evidence="1">Belongs to the ATPase B chain family.</text>
</comment>
<sequence length="193" mass="22069">MSSSVQVLSETIEIGKVVTASDEIAKRFNNLFPSIPMMLATFIAFVIVFLLLFFFLYNPVKKMIRKRQEFIQSQIDDSIKAKEDSLAKLSQAQAELIESHKQSVNIVNNAKSKAQEILASYKNKAISDANRLIEETQIDLNERKKEFDKNSRILIAETATEIAQRILKREISKSTQDEIIKDFLEDKTPIEDI</sequence>